<dbReference type="EMBL" id="L42023">
    <property type="protein sequence ID" value="AAC23020.1"/>
    <property type="status" value="ALT_INIT"/>
    <property type="molecule type" value="Genomic_DNA"/>
</dbReference>
<dbReference type="PIR" id="B64120">
    <property type="entry name" value="B64120"/>
</dbReference>
<dbReference type="RefSeq" id="NP_439524.2">
    <property type="nucleotide sequence ID" value="NC_000907.1"/>
</dbReference>
<dbReference type="SMR" id="P45185"/>
<dbReference type="STRING" id="71421.HI_1372"/>
<dbReference type="EnsemblBacteria" id="AAC23020">
    <property type="protein sequence ID" value="AAC23020"/>
    <property type="gene ID" value="HI_1372"/>
</dbReference>
<dbReference type="KEGG" id="hin:HI_1372"/>
<dbReference type="PATRIC" id="fig|71421.8.peg.1427"/>
<dbReference type="eggNOG" id="COG3006">
    <property type="taxonomic scope" value="Bacteria"/>
</dbReference>
<dbReference type="HOGENOM" id="CLU_049853_0_0_6"/>
<dbReference type="OrthoDB" id="6450805at2"/>
<dbReference type="PhylomeDB" id="P45185"/>
<dbReference type="BioCyc" id="HINF71421:G1GJ1-1398-MONOMER"/>
<dbReference type="Proteomes" id="UP000000579">
    <property type="component" value="Chromosome"/>
</dbReference>
<dbReference type="GO" id="GO:0005737">
    <property type="term" value="C:cytoplasm"/>
    <property type="evidence" value="ECO:0007669"/>
    <property type="project" value="UniProtKB-UniRule"/>
</dbReference>
<dbReference type="GO" id="GO:0009295">
    <property type="term" value="C:nucleoid"/>
    <property type="evidence" value="ECO:0007669"/>
    <property type="project" value="UniProtKB-SubCell"/>
</dbReference>
<dbReference type="GO" id="GO:0005509">
    <property type="term" value="F:calcium ion binding"/>
    <property type="evidence" value="ECO:0007669"/>
    <property type="project" value="UniProtKB-UniRule"/>
</dbReference>
<dbReference type="GO" id="GO:0051301">
    <property type="term" value="P:cell division"/>
    <property type="evidence" value="ECO:0007669"/>
    <property type="project" value="UniProtKB-KW"/>
</dbReference>
<dbReference type="GO" id="GO:0030261">
    <property type="term" value="P:chromosome condensation"/>
    <property type="evidence" value="ECO:0007669"/>
    <property type="project" value="UniProtKB-KW"/>
</dbReference>
<dbReference type="GO" id="GO:0007059">
    <property type="term" value="P:chromosome segregation"/>
    <property type="evidence" value="ECO:0007669"/>
    <property type="project" value="UniProtKB-UniRule"/>
</dbReference>
<dbReference type="GO" id="GO:0006260">
    <property type="term" value="P:DNA replication"/>
    <property type="evidence" value="ECO:0007669"/>
    <property type="project" value="UniProtKB-UniRule"/>
</dbReference>
<dbReference type="CDD" id="cd16337">
    <property type="entry name" value="MukF_C"/>
    <property type="match status" value="1"/>
</dbReference>
<dbReference type="Gene3D" id="1.20.58.590">
    <property type="entry name" value="Chromosome partition protein MukF, middle domain"/>
    <property type="match status" value="1"/>
</dbReference>
<dbReference type="Gene3D" id="1.10.225.40">
    <property type="entry name" value="MukF, C-terminal domain"/>
    <property type="match status" value="1"/>
</dbReference>
<dbReference type="Gene3D" id="1.10.10.10">
    <property type="entry name" value="Winged helix-like DNA-binding domain superfamily/Winged helix DNA-binding domain"/>
    <property type="match status" value="1"/>
</dbReference>
<dbReference type="HAMAP" id="MF_01803">
    <property type="entry name" value="MukF"/>
    <property type="match status" value="1"/>
</dbReference>
<dbReference type="InterPro" id="IPR005582">
    <property type="entry name" value="Chromosome_partition_MukF"/>
</dbReference>
<dbReference type="InterPro" id="IPR033441">
    <property type="entry name" value="MukF_C"/>
</dbReference>
<dbReference type="InterPro" id="IPR038198">
    <property type="entry name" value="MukF_C_sf"/>
</dbReference>
<dbReference type="InterPro" id="IPR033440">
    <property type="entry name" value="MukF_M"/>
</dbReference>
<dbReference type="InterPro" id="IPR036141">
    <property type="entry name" value="MukF_M_sp"/>
</dbReference>
<dbReference type="InterPro" id="IPR033439">
    <property type="entry name" value="MukF_WHTH"/>
</dbReference>
<dbReference type="InterPro" id="IPR036388">
    <property type="entry name" value="WH-like_DNA-bd_sf"/>
</dbReference>
<dbReference type="InterPro" id="IPR036390">
    <property type="entry name" value="WH_DNA-bd_sf"/>
</dbReference>
<dbReference type="NCBIfam" id="NF003615">
    <property type="entry name" value="PRK05260.1"/>
    <property type="match status" value="1"/>
</dbReference>
<dbReference type="Pfam" id="PF03882">
    <property type="entry name" value="KicB"/>
    <property type="match status" value="1"/>
</dbReference>
<dbReference type="Pfam" id="PF17193">
    <property type="entry name" value="MukF_C"/>
    <property type="match status" value="1"/>
</dbReference>
<dbReference type="Pfam" id="PF17192">
    <property type="entry name" value="MukF_M"/>
    <property type="match status" value="1"/>
</dbReference>
<dbReference type="PIRSF" id="PIRSF018282">
    <property type="entry name" value="MukF"/>
    <property type="match status" value="1"/>
</dbReference>
<dbReference type="SUPFAM" id="SSF140570">
    <property type="entry name" value="MukF C-terminal domain-like"/>
    <property type="match status" value="1"/>
</dbReference>
<dbReference type="SUPFAM" id="SSF46785">
    <property type="entry name" value="Winged helix' DNA-binding domain"/>
    <property type="match status" value="1"/>
</dbReference>
<keyword id="KW-0106">Calcium</keyword>
<keyword id="KW-0131">Cell cycle</keyword>
<keyword id="KW-0132">Cell division</keyword>
<keyword id="KW-0159">Chromosome partition</keyword>
<keyword id="KW-0963">Cytoplasm</keyword>
<keyword id="KW-0226">DNA condensation</keyword>
<keyword id="KW-1185">Reference proteome</keyword>
<reference key="1">
    <citation type="journal article" date="1995" name="Science">
        <title>Whole-genome random sequencing and assembly of Haemophilus influenzae Rd.</title>
        <authorList>
            <person name="Fleischmann R.D."/>
            <person name="Adams M.D."/>
            <person name="White O."/>
            <person name="Clayton R.A."/>
            <person name="Kirkness E.F."/>
            <person name="Kerlavage A.R."/>
            <person name="Bult C.J."/>
            <person name="Tomb J.-F."/>
            <person name="Dougherty B.A."/>
            <person name="Merrick J.M."/>
            <person name="McKenney K."/>
            <person name="Sutton G.G."/>
            <person name="FitzHugh W."/>
            <person name="Fields C.A."/>
            <person name="Gocayne J.D."/>
            <person name="Scott J.D."/>
            <person name="Shirley R."/>
            <person name="Liu L.-I."/>
            <person name="Glodek A."/>
            <person name="Kelley J.M."/>
            <person name="Weidman J.F."/>
            <person name="Phillips C.A."/>
            <person name="Spriggs T."/>
            <person name="Hedblom E."/>
            <person name="Cotton M.D."/>
            <person name="Utterback T.R."/>
            <person name="Hanna M.C."/>
            <person name="Nguyen D.T."/>
            <person name="Saudek D.M."/>
            <person name="Brandon R.C."/>
            <person name="Fine L.D."/>
            <person name="Fritchman J.L."/>
            <person name="Fuhrmann J.L."/>
            <person name="Geoghagen N.S.M."/>
            <person name="Gnehm C.L."/>
            <person name="McDonald L.A."/>
            <person name="Small K.V."/>
            <person name="Fraser C.M."/>
            <person name="Smith H.O."/>
            <person name="Venter J.C."/>
        </authorList>
    </citation>
    <scope>NUCLEOTIDE SEQUENCE [LARGE SCALE GENOMIC DNA]</scope>
    <source>
        <strain>ATCC 51907 / DSM 11121 / KW20 / Rd</strain>
    </source>
</reference>
<name>MUKF_HAEIN</name>
<evidence type="ECO:0000255" key="1">
    <source>
        <dbReference type="HAMAP-Rule" id="MF_01803"/>
    </source>
</evidence>
<evidence type="ECO:0000305" key="2"/>
<proteinExistence type="inferred from homology"/>
<comment type="function">
    <text evidence="1">Involved in chromosome condensation, segregation and cell cycle progression. May participate in facilitating chromosome segregation by condensation DNA from both sides of a centrally located replisome during cell division. Not required for mini-F plasmid partitioning. Probably acts via its interaction with MukB and MukE. Overexpression results in anucleate cells. It has a calcium binding activity.</text>
</comment>
<comment type="subunit">
    <text evidence="1">Interacts, and probably forms a ternary complex, with MukE and MukB via its C-terminal region. The complex formation is stimulated by calcium or magnesium. It is required for an interaction between MukE and MukB.</text>
</comment>
<comment type="subcellular location">
    <subcellularLocation>
        <location evidence="1">Cytoplasm</location>
        <location evidence="1">Nucleoid</location>
    </subcellularLocation>
    <text evidence="1">Restricted to the nucleoid region.</text>
</comment>
<comment type="similarity">
    <text evidence="1">Belongs to the MukF family.</text>
</comment>
<comment type="sequence caution" evidence="2">
    <conflict type="erroneous initiation">
        <sequence resource="EMBL-CDS" id="AAC23020"/>
    </conflict>
</comment>
<protein>
    <recommendedName>
        <fullName evidence="1">Chromosome partition protein MukF</fullName>
    </recommendedName>
</protein>
<gene>
    <name evidence="1" type="primary">mukF</name>
    <name type="synonym">kicB</name>
    <name type="ordered locus">HI_1372</name>
</gene>
<accession>P45185</accession>
<organism>
    <name type="scientific">Haemophilus influenzae (strain ATCC 51907 / DSM 11121 / KW20 / Rd)</name>
    <dbReference type="NCBI Taxonomy" id="71421"/>
    <lineage>
        <taxon>Bacteria</taxon>
        <taxon>Pseudomonadati</taxon>
        <taxon>Pseudomonadota</taxon>
        <taxon>Gammaproteobacteria</taxon>
        <taxon>Pasteurellales</taxon>
        <taxon>Pasteurellaceae</taxon>
        <taxon>Haemophilus</taxon>
    </lineage>
</organism>
<feature type="chain" id="PRO_0000211606" description="Chromosome partition protein MukF">
    <location>
        <begin position="1"/>
        <end position="444"/>
    </location>
</feature>
<feature type="region of interest" description="Leucine-zipper">
    <location>
        <begin position="212"/>
        <end position="240"/>
    </location>
</feature>
<sequence length="444" mass="51557">MIETSQTIPELVSWAKDREFSLNLPTERLVFLLAIAIYNNERLDGEMLEADLVDIFRHTMNAFEQSTDAIATRANNAINELVKQRLLNRFSSEFTEGLAIYRLTPLGVGVSDYYIRQREFSALRLSVQLSIVADEIQRASDSAEEGVENNENEHYWRRNVFAPLKYSVAEIFDSIDLSQRIMDENQQSIKDEIAELLTKDWQAAISSCERLLDETSGNLRELQDTLNAAGDKLQAQLLRIQDCVIGRDDLYFIDQLITDLQSKLDRIISWGQQAIDLWIGYDRHVHKFIRTAIDMDKNRVFSQRLRNSIHHYFDHPWFLWTAQAERLVDLRDEEMVLREDDALGELPEELQYESLSDLHDQIVEHMQGLLIAYRENNRPIDLSLVLKEQLENYPLSRHFDVARIIVDQAVRLGMANDDLSGIYPDWQAINKRGAEVQAHVIDKY</sequence>